<comment type="function">
    <text evidence="1">Allows the formation of correctly charged Asn-tRNA(Asn) or Gln-tRNA(Gln) through the transamidation of misacylated Asp-tRNA(Asn) or Glu-tRNA(Gln) in organisms which lack either or both of asparaginyl-tRNA or glutaminyl-tRNA synthetases. The reaction takes place in the presence of glutamine and ATP through an activated phospho-Asp-tRNA(Asn) or phospho-Glu-tRNA(Gln).</text>
</comment>
<comment type="catalytic activity">
    <reaction evidence="1">
        <text>L-glutamyl-tRNA(Gln) + L-glutamine + ATP + H2O = L-glutaminyl-tRNA(Gln) + L-glutamate + ADP + phosphate + H(+)</text>
        <dbReference type="Rhea" id="RHEA:17521"/>
        <dbReference type="Rhea" id="RHEA-COMP:9681"/>
        <dbReference type="Rhea" id="RHEA-COMP:9684"/>
        <dbReference type="ChEBI" id="CHEBI:15377"/>
        <dbReference type="ChEBI" id="CHEBI:15378"/>
        <dbReference type="ChEBI" id="CHEBI:29985"/>
        <dbReference type="ChEBI" id="CHEBI:30616"/>
        <dbReference type="ChEBI" id="CHEBI:43474"/>
        <dbReference type="ChEBI" id="CHEBI:58359"/>
        <dbReference type="ChEBI" id="CHEBI:78520"/>
        <dbReference type="ChEBI" id="CHEBI:78521"/>
        <dbReference type="ChEBI" id="CHEBI:456216"/>
    </reaction>
</comment>
<comment type="catalytic activity">
    <reaction evidence="1">
        <text>L-aspartyl-tRNA(Asn) + L-glutamine + ATP + H2O = L-asparaginyl-tRNA(Asn) + L-glutamate + ADP + phosphate + 2 H(+)</text>
        <dbReference type="Rhea" id="RHEA:14513"/>
        <dbReference type="Rhea" id="RHEA-COMP:9674"/>
        <dbReference type="Rhea" id="RHEA-COMP:9677"/>
        <dbReference type="ChEBI" id="CHEBI:15377"/>
        <dbReference type="ChEBI" id="CHEBI:15378"/>
        <dbReference type="ChEBI" id="CHEBI:29985"/>
        <dbReference type="ChEBI" id="CHEBI:30616"/>
        <dbReference type="ChEBI" id="CHEBI:43474"/>
        <dbReference type="ChEBI" id="CHEBI:58359"/>
        <dbReference type="ChEBI" id="CHEBI:78515"/>
        <dbReference type="ChEBI" id="CHEBI:78516"/>
        <dbReference type="ChEBI" id="CHEBI:456216"/>
    </reaction>
</comment>
<comment type="subunit">
    <text evidence="1">Heterotrimer of A, B and C subunits.</text>
</comment>
<comment type="similarity">
    <text evidence="1">Belongs to the GatC family.</text>
</comment>
<reference key="1">
    <citation type="submission" date="2007-04" db="EMBL/GenBank/DDBJ databases">
        <title>Genome sequence of the thermophilic hydrogen-producing bacterium Caldicellulosiruptor saccharolyticus DSM 8903.</title>
        <authorList>
            <person name="Copeland A."/>
            <person name="Lucas S."/>
            <person name="Lapidus A."/>
            <person name="Barry K."/>
            <person name="Detter J.C."/>
            <person name="Glavina del Rio T."/>
            <person name="Hammon N."/>
            <person name="Israni S."/>
            <person name="Dalin E."/>
            <person name="Tice H."/>
            <person name="Pitluck S."/>
            <person name="Kiss H."/>
            <person name="Brettin T."/>
            <person name="Bruce D."/>
            <person name="Han C."/>
            <person name="Schmutz J."/>
            <person name="Larimer F."/>
            <person name="Land M."/>
            <person name="Hauser L."/>
            <person name="Kyrpides N."/>
            <person name="Lykidis A."/>
            <person name="van de Werken H.J.G."/>
            <person name="Verhaart M.R.A."/>
            <person name="VanFossen A.L."/>
            <person name="Lewis D.L."/>
            <person name="Nichols J.D."/>
            <person name="Goorissen H.P."/>
            <person name="van Niel E.W.J."/>
            <person name="Stams F.J.M."/>
            <person name="Willquist K.U."/>
            <person name="Ward D.E."/>
            <person name="van der Oost J."/>
            <person name="Kelly R.M."/>
            <person name="Kengen S.M.W."/>
            <person name="Richardson P."/>
        </authorList>
    </citation>
    <scope>NUCLEOTIDE SEQUENCE [LARGE SCALE GENOMIC DNA]</scope>
    <source>
        <strain>ATCC 43494 / DSM 8903 / Tp8T 6331</strain>
    </source>
</reference>
<protein>
    <recommendedName>
        <fullName evidence="1">Aspartyl/glutamyl-tRNA(Asn/Gln) amidotransferase subunit C</fullName>
        <shortName evidence="1">Asp/Glu-ADT subunit C</shortName>
        <ecNumber evidence="1">6.3.5.-</ecNumber>
    </recommendedName>
</protein>
<dbReference type="EC" id="6.3.5.-" evidence="1"/>
<dbReference type="EMBL" id="CP000679">
    <property type="protein sequence ID" value="ABP66522.1"/>
    <property type="molecule type" value="Genomic_DNA"/>
</dbReference>
<dbReference type="RefSeq" id="WP_011916468.1">
    <property type="nucleotide sequence ID" value="NC_009437.1"/>
</dbReference>
<dbReference type="SMR" id="A4XHY7"/>
<dbReference type="STRING" id="351627.Csac_0908"/>
<dbReference type="KEGG" id="csc:Csac_0908"/>
<dbReference type="eggNOG" id="COG0721">
    <property type="taxonomic scope" value="Bacteria"/>
</dbReference>
<dbReference type="HOGENOM" id="CLU_105899_1_2_9"/>
<dbReference type="OrthoDB" id="9813938at2"/>
<dbReference type="Proteomes" id="UP000000256">
    <property type="component" value="Chromosome"/>
</dbReference>
<dbReference type="GO" id="GO:0050566">
    <property type="term" value="F:asparaginyl-tRNA synthase (glutamine-hydrolyzing) activity"/>
    <property type="evidence" value="ECO:0007669"/>
    <property type="project" value="RHEA"/>
</dbReference>
<dbReference type="GO" id="GO:0005524">
    <property type="term" value="F:ATP binding"/>
    <property type="evidence" value="ECO:0007669"/>
    <property type="project" value="UniProtKB-KW"/>
</dbReference>
<dbReference type="GO" id="GO:0050567">
    <property type="term" value="F:glutaminyl-tRNA synthase (glutamine-hydrolyzing) activity"/>
    <property type="evidence" value="ECO:0007669"/>
    <property type="project" value="UniProtKB-UniRule"/>
</dbReference>
<dbReference type="GO" id="GO:0070681">
    <property type="term" value="P:glutaminyl-tRNAGln biosynthesis via transamidation"/>
    <property type="evidence" value="ECO:0007669"/>
    <property type="project" value="TreeGrafter"/>
</dbReference>
<dbReference type="GO" id="GO:0006450">
    <property type="term" value="P:regulation of translational fidelity"/>
    <property type="evidence" value="ECO:0007669"/>
    <property type="project" value="InterPro"/>
</dbReference>
<dbReference type="GO" id="GO:0006412">
    <property type="term" value="P:translation"/>
    <property type="evidence" value="ECO:0007669"/>
    <property type="project" value="UniProtKB-UniRule"/>
</dbReference>
<dbReference type="Gene3D" id="1.10.20.60">
    <property type="entry name" value="Glu-tRNAGln amidotransferase C subunit, N-terminal domain"/>
    <property type="match status" value="1"/>
</dbReference>
<dbReference type="HAMAP" id="MF_00122">
    <property type="entry name" value="GatC"/>
    <property type="match status" value="1"/>
</dbReference>
<dbReference type="InterPro" id="IPR036113">
    <property type="entry name" value="Asp/Glu-ADT_sf_sub_c"/>
</dbReference>
<dbReference type="InterPro" id="IPR003837">
    <property type="entry name" value="GatC"/>
</dbReference>
<dbReference type="NCBIfam" id="TIGR00135">
    <property type="entry name" value="gatC"/>
    <property type="match status" value="1"/>
</dbReference>
<dbReference type="PANTHER" id="PTHR15004">
    <property type="entry name" value="GLUTAMYL-TRNA(GLN) AMIDOTRANSFERASE SUBUNIT C, MITOCHONDRIAL"/>
    <property type="match status" value="1"/>
</dbReference>
<dbReference type="PANTHER" id="PTHR15004:SF0">
    <property type="entry name" value="GLUTAMYL-TRNA(GLN) AMIDOTRANSFERASE SUBUNIT C, MITOCHONDRIAL"/>
    <property type="match status" value="1"/>
</dbReference>
<dbReference type="Pfam" id="PF02686">
    <property type="entry name" value="GatC"/>
    <property type="match status" value="1"/>
</dbReference>
<dbReference type="SUPFAM" id="SSF141000">
    <property type="entry name" value="Glu-tRNAGln amidotransferase C subunit"/>
    <property type="match status" value="1"/>
</dbReference>
<proteinExistence type="inferred from homology"/>
<accession>A4XHY7</accession>
<feature type="chain" id="PRO_1000071383" description="Aspartyl/glutamyl-tRNA(Asn/Gln) amidotransferase subunit C">
    <location>
        <begin position="1"/>
        <end position="94"/>
    </location>
</feature>
<gene>
    <name evidence="1" type="primary">gatC</name>
    <name type="ordered locus">Csac_0908</name>
</gene>
<organism>
    <name type="scientific">Caldicellulosiruptor saccharolyticus (strain ATCC 43494 / DSM 8903 / Tp8T 6331)</name>
    <dbReference type="NCBI Taxonomy" id="351627"/>
    <lineage>
        <taxon>Bacteria</taxon>
        <taxon>Bacillati</taxon>
        <taxon>Bacillota</taxon>
        <taxon>Bacillota incertae sedis</taxon>
        <taxon>Caldicellulosiruptorales</taxon>
        <taxon>Caldicellulosiruptoraceae</taxon>
        <taxon>Caldicellulosiruptor</taxon>
    </lineage>
</organism>
<sequence length="94" mass="10715">MITRNDVEYVANLARLTLTEEEIEKMTKELGAIIEFANKLSDLDTEGIEPTAHVLNLYNVFRSDEVKPSYPREEILKNAPSHDDVCIKVPKIVE</sequence>
<evidence type="ECO:0000255" key="1">
    <source>
        <dbReference type="HAMAP-Rule" id="MF_00122"/>
    </source>
</evidence>
<name>GATC_CALS8</name>
<keyword id="KW-0067">ATP-binding</keyword>
<keyword id="KW-0436">Ligase</keyword>
<keyword id="KW-0547">Nucleotide-binding</keyword>
<keyword id="KW-0648">Protein biosynthesis</keyword>